<keyword id="KW-0963">Cytoplasm</keyword>
<keyword id="KW-0206">Cytoskeleton</keyword>
<keyword id="KW-0539">Nucleus</keyword>
<keyword id="KW-1185">Reference proteome</keyword>
<keyword id="KW-0690">Ribosome biogenesis</keyword>
<dbReference type="EMBL" id="FO080477">
    <property type="protein sequence ID" value="CCD63990.1"/>
    <property type="molecule type" value="Genomic_DNA"/>
</dbReference>
<dbReference type="RefSeq" id="NP_497226.2">
    <property type="nucleotide sequence ID" value="NM_064825.5"/>
</dbReference>
<dbReference type="SMR" id="Q23202"/>
<dbReference type="BioGRID" id="40489">
    <property type="interactions" value="2"/>
</dbReference>
<dbReference type="FunCoup" id="Q23202">
    <property type="interactions" value="2603"/>
</dbReference>
<dbReference type="STRING" id="6239.W06E11.4.1"/>
<dbReference type="PaxDb" id="6239-W06E11.4"/>
<dbReference type="PeptideAtlas" id="Q23202"/>
<dbReference type="EnsemblMetazoa" id="W06E11.4.1">
    <property type="protein sequence ID" value="W06E11.4.1"/>
    <property type="gene ID" value="WBGene00021063"/>
</dbReference>
<dbReference type="GeneID" id="175218"/>
<dbReference type="KEGG" id="cel:CELE_W06E11.4"/>
<dbReference type="UCSC" id="W06E11.4">
    <property type="organism name" value="c. elegans"/>
</dbReference>
<dbReference type="AGR" id="WB:WBGene00021063"/>
<dbReference type="CTD" id="175218"/>
<dbReference type="WormBase" id="W06E11.4">
    <property type="protein sequence ID" value="CE30118"/>
    <property type="gene ID" value="WBGene00021063"/>
    <property type="gene designation" value="sbds-1"/>
</dbReference>
<dbReference type="eggNOG" id="KOG2917">
    <property type="taxonomic scope" value="Eukaryota"/>
</dbReference>
<dbReference type="GeneTree" id="ENSGT00390000008135"/>
<dbReference type="HOGENOM" id="CLU_043216_1_1_1"/>
<dbReference type="InParanoid" id="Q23202"/>
<dbReference type="OMA" id="AVNPQMD"/>
<dbReference type="OrthoDB" id="10253092at2759"/>
<dbReference type="PhylomeDB" id="Q23202"/>
<dbReference type="PRO" id="PR:Q23202"/>
<dbReference type="Proteomes" id="UP000001940">
    <property type="component" value="Chromosome III"/>
</dbReference>
<dbReference type="Bgee" id="WBGene00021063">
    <property type="expression patterns" value="Expressed in germ line (C elegans) and 4 other cell types or tissues"/>
</dbReference>
<dbReference type="GO" id="GO:0005737">
    <property type="term" value="C:cytoplasm"/>
    <property type="evidence" value="ECO:0007669"/>
    <property type="project" value="UniProtKB-SubCell"/>
</dbReference>
<dbReference type="GO" id="GO:0005730">
    <property type="term" value="C:nucleolus"/>
    <property type="evidence" value="ECO:0007669"/>
    <property type="project" value="UniProtKB-SubCell"/>
</dbReference>
<dbReference type="GO" id="GO:0005654">
    <property type="term" value="C:nucleoplasm"/>
    <property type="evidence" value="ECO:0007669"/>
    <property type="project" value="UniProtKB-SubCell"/>
</dbReference>
<dbReference type="GO" id="GO:0005819">
    <property type="term" value="C:spindle"/>
    <property type="evidence" value="ECO:0007669"/>
    <property type="project" value="UniProtKB-SubCell"/>
</dbReference>
<dbReference type="GO" id="GO:0042256">
    <property type="term" value="P:cytosolic ribosome assembly"/>
    <property type="evidence" value="ECO:0007669"/>
    <property type="project" value="InterPro"/>
</dbReference>
<dbReference type="FunFam" id="3.30.1250.10:FF:000001">
    <property type="entry name" value="SBDS, ribosome maturation factor"/>
    <property type="match status" value="1"/>
</dbReference>
<dbReference type="Gene3D" id="3.30.70.240">
    <property type="match status" value="1"/>
</dbReference>
<dbReference type="Gene3D" id="3.30.1250.10">
    <property type="entry name" value="Ribosome maturation protein SBDS, N-terminal domain"/>
    <property type="match status" value="1"/>
</dbReference>
<dbReference type="Gene3D" id="1.10.10.900">
    <property type="entry name" value="SBDS protein C-terminal domain, subdomain 1"/>
    <property type="match status" value="1"/>
</dbReference>
<dbReference type="InterPro" id="IPR018023">
    <property type="entry name" value="Ribosome_mat_SBDS_CS"/>
</dbReference>
<dbReference type="InterPro" id="IPR036786">
    <property type="entry name" value="Ribosome_mat_SBDS_N_sf"/>
</dbReference>
<dbReference type="InterPro" id="IPR002140">
    <property type="entry name" value="Sdo1/SBDS"/>
</dbReference>
<dbReference type="InterPro" id="IPR039100">
    <property type="entry name" value="Sdo1/SBDS-like"/>
</dbReference>
<dbReference type="InterPro" id="IPR046928">
    <property type="entry name" value="SDO1/SBDS_C"/>
</dbReference>
<dbReference type="InterPro" id="IPR018978">
    <property type="entry name" value="SDO1/SBDS_central"/>
</dbReference>
<dbReference type="InterPro" id="IPR037188">
    <property type="entry name" value="Sdo1/SBDS_central_sf"/>
</dbReference>
<dbReference type="InterPro" id="IPR019783">
    <property type="entry name" value="SDO1/SBDS_N"/>
</dbReference>
<dbReference type="NCBIfam" id="TIGR00291">
    <property type="entry name" value="RNA_SBDS"/>
    <property type="match status" value="1"/>
</dbReference>
<dbReference type="PANTHER" id="PTHR10927">
    <property type="entry name" value="RIBOSOME MATURATION PROTEIN SBDS"/>
    <property type="match status" value="1"/>
</dbReference>
<dbReference type="PANTHER" id="PTHR10927:SF1">
    <property type="entry name" value="RIBOSOME MATURATION PROTEIN SBDS"/>
    <property type="match status" value="1"/>
</dbReference>
<dbReference type="Pfam" id="PF20268">
    <property type="entry name" value="SBDS_C"/>
    <property type="match status" value="1"/>
</dbReference>
<dbReference type="Pfam" id="PF09377">
    <property type="entry name" value="SBDS_domain_II"/>
    <property type="match status" value="1"/>
</dbReference>
<dbReference type="Pfam" id="PF01172">
    <property type="entry name" value="SBDS_N"/>
    <property type="match status" value="1"/>
</dbReference>
<dbReference type="SUPFAM" id="SSF89895">
    <property type="entry name" value="FYSH domain"/>
    <property type="match status" value="1"/>
</dbReference>
<dbReference type="SUPFAM" id="SSF109728">
    <property type="entry name" value="Hypothetical protein AF0491, middle domain"/>
    <property type="match status" value="1"/>
</dbReference>
<dbReference type="PROSITE" id="PS01267">
    <property type="entry name" value="UPF0023"/>
    <property type="match status" value="1"/>
</dbReference>
<feature type="chain" id="PRO_0000123766" description="Ribosome maturation protein SBDS">
    <location>
        <begin position="1"/>
        <end position="253"/>
    </location>
</feature>
<protein>
    <recommendedName>
        <fullName>Ribosome maturation protein SBDS</fullName>
    </recommendedName>
    <alternativeName>
        <fullName>Shwachman-Bodian-Diamond syndrome protein homolog</fullName>
    </alternativeName>
</protein>
<name>SBDS_CAEEL</name>
<organism>
    <name type="scientific">Caenorhabditis elegans</name>
    <dbReference type="NCBI Taxonomy" id="6239"/>
    <lineage>
        <taxon>Eukaryota</taxon>
        <taxon>Metazoa</taxon>
        <taxon>Ecdysozoa</taxon>
        <taxon>Nematoda</taxon>
        <taxon>Chromadorea</taxon>
        <taxon>Rhabditida</taxon>
        <taxon>Rhabditina</taxon>
        <taxon>Rhabditomorpha</taxon>
        <taxon>Rhabditoidea</taxon>
        <taxon>Rhabditidae</taxon>
        <taxon>Peloderinae</taxon>
        <taxon>Caenorhabditis</taxon>
    </lineage>
</organism>
<accession>Q23202</accession>
<comment type="function">
    <text evidence="1">Required for the assembly of mature ribosomes and ribosome biogenesis. Together with K10C3.5b/EFL1, triggers the GTP-dependent release of ribosome maturation factors from 60S pre-ribosomes in the cytoplasm, thereby activating ribosomes for translation competence by allowing 80S ribosome assembly. Required for normal levels of protein synthesis. May play a role in cellular stress resistance. May play a role in cellular response to DNA damage. May play a role in cell proliferation (By similarity).</text>
</comment>
<comment type="subunit">
    <text evidence="1">Associates with the 60S ribosomal subunit.</text>
</comment>
<comment type="subcellular location">
    <subcellularLocation>
        <location evidence="1">Cytoplasm</location>
    </subcellularLocation>
    <subcellularLocation>
        <location evidence="1">Nucleus</location>
        <location evidence="1">Nucleolus</location>
    </subcellularLocation>
    <subcellularLocation>
        <location evidence="1">Nucleus</location>
        <location evidence="1">Nucleoplasm</location>
    </subcellularLocation>
    <subcellularLocation>
        <location evidence="1">Cytoplasm</location>
        <location evidence="1">Cytoskeleton</location>
        <location evidence="1">Spindle</location>
    </subcellularLocation>
    <text evidence="1">Primarily detected in the cytoplasm, and at low levels in nucleus and nucleolus. Detected at the mitotic spindle. Colocalizes with the microtubule organizing center during interphase (By similarity).</text>
</comment>
<comment type="similarity">
    <text evidence="2">Belongs to the SDO1/SBDS family.</text>
</comment>
<gene>
    <name type="primary">sbds-1</name>
    <name type="ORF">W06E11.4</name>
</gene>
<proteinExistence type="inferred from homology"/>
<sequence>MSKNIKTPTNQKVLTNVAVVRMKKTGKRFEIACYKNKVVNWRNKSEKDIDEVLQTHTVFSNVSKGQLSKKEELIAAFGIEDQLEICKIILDKGDLQVSEKERQAASDQSLKEVSQLIASMVVNPETKRPVPPSVIDKALQEMHFSLKPNRSSKQQALDAIPKLRETLKIERAKMKIRVAIPTKEAKSVHTKLKTLFSDVEVDDWQDGSLEMVGLIEPGSFRALDDLVRNETKGHGRLEILSLKDVVEGELQIS</sequence>
<evidence type="ECO:0000250" key="1"/>
<evidence type="ECO:0000305" key="2"/>
<reference key="1">
    <citation type="journal article" date="1998" name="Science">
        <title>Genome sequence of the nematode C. elegans: a platform for investigating biology.</title>
        <authorList>
            <consortium name="The C. elegans sequencing consortium"/>
        </authorList>
    </citation>
    <scope>NUCLEOTIDE SEQUENCE [LARGE SCALE GENOMIC DNA]</scope>
    <source>
        <strain>Bristol N2</strain>
    </source>
</reference>